<dbReference type="EC" id="3.4.24.-"/>
<dbReference type="EMBL" id="FJ349344">
    <property type="protein sequence ID" value="ACJ03989.1"/>
    <property type="molecule type" value="Genomic_DNA"/>
</dbReference>
<dbReference type="EMBL" id="DQ384950">
    <property type="protein sequence ID" value="ABL84985.1"/>
    <property type="molecule type" value="Genomic_DNA"/>
</dbReference>
<dbReference type="SMR" id="B6V9X0"/>
<dbReference type="MEROPS" id="M36.001"/>
<dbReference type="GlyCosmos" id="B6V9X0">
    <property type="glycosylation" value="3 sites, No reported glycans"/>
</dbReference>
<dbReference type="VEuPathDB" id="FungiDB:TESG_02775"/>
<dbReference type="GO" id="GO:0005576">
    <property type="term" value="C:extracellular region"/>
    <property type="evidence" value="ECO:0007669"/>
    <property type="project" value="UniProtKB-SubCell"/>
</dbReference>
<dbReference type="GO" id="GO:0004222">
    <property type="term" value="F:metalloendopeptidase activity"/>
    <property type="evidence" value="ECO:0007669"/>
    <property type="project" value="InterPro"/>
</dbReference>
<dbReference type="GO" id="GO:0008270">
    <property type="term" value="F:zinc ion binding"/>
    <property type="evidence" value="ECO:0007669"/>
    <property type="project" value="InterPro"/>
</dbReference>
<dbReference type="GO" id="GO:0006508">
    <property type="term" value="P:proteolysis"/>
    <property type="evidence" value="ECO:0007669"/>
    <property type="project" value="UniProtKB-KW"/>
</dbReference>
<dbReference type="CDD" id="cd09596">
    <property type="entry name" value="M36"/>
    <property type="match status" value="1"/>
</dbReference>
<dbReference type="Gene3D" id="3.10.170.10">
    <property type="match status" value="1"/>
</dbReference>
<dbReference type="Gene3D" id="1.10.390.10">
    <property type="entry name" value="Neutral Protease Domain 2"/>
    <property type="match status" value="1"/>
</dbReference>
<dbReference type="InterPro" id="IPR011096">
    <property type="entry name" value="FTP_domain"/>
</dbReference>
<dbReference type="InterPro" id="IPR050371">
    <property type="entry name" value="Fungal_virulence_M36"/>
</dbReference>
<dbReference type="InterPro" id="IPR001842">
    <property type="entry name" value="Peptidase_M36"/>
</dbReference>
<dbReference type="InterPro" id="IPR027268">
    <property type="entry name" value="Peptidase_M4/M1_CTD_sf"/>
</dbReference>
<dbReference type="PANTHER" id="PTHR33478">
    <property type="entry name" value="EXTRACELLULAR METALLOPROTEINASE MEP"/>
    <property type="match status" value="1"/>
</dbReference>
<dbReference type="PANTHER" id="PTHR33478:SF1">
    <property type="entry name" value="EXTRACELLULAR METALLOPROTEINASE MEP"/>
    <property type="match status" value="1"/>
</dbReference>
<dbReference type="Pfam" id="PF07504">
    <property type="entry name" value="FTP"/>
    <property type="match status" value="1"/>
</dbReference>
<dbReference type="Pfam" id="PF02128">
    <property type="entry name" value="Peptidase_M36"/>
    <property type="match status" value="1"/>
</dbReference>
<dbReference type="PRINTS" id="PR00999">
    <property type="entry name" value="FUNGALYSIN"/>
</dbReference>
<dbReference type="SUPFAM" id="SSF55486">
    <property type="entry name" value="Metalloproteases ('zincins'), catalytic domain"/>
    <property type="match status" value="1"/>
</dbReference>
<dbReference type="PROSITE" id="PS00142">
    <property type="entry name" value="ZINC_PROTEASE"/>
    <property type="match status" value="1"/>
</dbReference>
<reference key="1">
    <citation type="submission" date="2008-10" db="EMBL/GenBank/DDBJ databases">
        <title>Comparing putative pathogenicity factors between Trichophyton tonsurans and Trichophyton equinum.</title>
        <authorList>
            <person name="Krishnan S.K."/>
            <person name="Preuett B.L."/>
            <person name="Abdel-Rahman S.M."/>
        </authorList>
    </citation>
    <scope>NUCLEOTIDE SEQUENCE [GENOMIC DNA]</scope>
</reference>
<reference key="2">
    <citation type="journal article" date="2007" name="FEMS Microbiol. Lett.">
        <title>Closely related dermatophyte species produce different patterns of secreted proteins.</title>
        <authorList>
            <person name="Giddey K."/>
            <person name="Favre B."/>
            <person name="Quadroni M."/>
            <person name="Monod M."/>
        </authorList>
    </citation>
    <scope>NUCLEOTIDE SEQUENCE [GENOMIC DNA] OF 238-628</scope>
    <scope>IDENTIFICATION BY MASS SPECTROMETRY</scope>
    <scope>SUBCELLULAR LOCATION</scope>
    <source>
        <strain>ER 6906</strain>
    </source>
</reference>
<organism>
    <name type="scientific">Trichophyton tonsurans</name>
    <name type="common">Scalp ringworm fungus</name>
    <dbReference type="NCBI Taxonomy" id="34387"/>
    <lineage>
        <taxon>Eukaryota</taxon>
        <taxon>Fungi</taxon>
        <taxon>Dikarya</taxon>
        <taxon>Ascomycota</taxon>
        <taxon>Pezizomycotina</taxon>
        <taxon>Eurotiomycetes</taxon>
        <taxon>Eurotiomycetidae</taxon>
        <taxon>Onygenales</taxon>
        <taxon>Arthrodermataceae</taxon>
        <taxon>Trichophyton</taxon>
    </lineage>
</organism>
<proteinExistence type="evidence at protein level"/>
<gene>
    <name type="primary">MEP3</name>
</gene>
<protein>
    <recommendedName>
        <fullName>Extracellular metalloproteinase 3</fullName>
        <ecNumber>3.4.24.-</ecNumber>
    </recommendedName>
    <alternativeName>
        <fullName>Fungalysin MEP3</fullName>
    </alternativeName>
</protein>
<feature type="signal peptide" evidence="2">
    <location>
        <begin position="1"/>
        <end position="18"/>
    </location>
</feature>
<feature type="propeptide" id="PRO_0000380856" evidence="1">
    <location>
        <begin position="19"/>
        <end position="246"/>
    </location>
</feature>
<feature type="chain" id="PRO_0000380857" description="Extracellular metalloproteinase 3">
    <location>
        <begin position="247"/>
        <end position="633"/>
    </location>
</feature>
<feature type="active site" evidence="3">
    <location>
        <position position="430"/>
    </location>
</feature>
<feature type="binding site" evidence="3">
    <location>
        <position position="429"/>
    </location>
    <ligand>
        <name>Zn(2+)</name>
        <dbReference type="ChEBI" id="CHEBI:29105"/>
        <note>catalytic</note>
    </ligand>
</feature>
<feature type="binding site" evidence="3">
    <location>
        <position position="433"/>
    </location>
    <ligand>
        <name>Zn(2+)</name>
        <dbReference type="ChEBI" id="CHEBI:29105"/>
        <note>catalytic</note>
    </ligand>
</feature>
<feature type="glycosylation site" description="N-linked (GlcNAc...) asparagine" evidence="2">
    <location>
        <position position="410"/>
    </location>
</feature>
<feature type="glycosylation site" description="N-linked (GlcNAc...) asparagine" evidence="2">
    <location>
        <position position="480"/>
    </location>
</feature>
<feature type="glycosylation site" description="N-linked (GlcNAc...) asparagine" evidence="2">
    <location>
        <position position="622"/>
    </location>
</feature>
<evidence type="ECO:0000250" key="1"/>
<evidence type="ECO:0000255" key="2"/>
<evidence type="ECO:0000255" key="3">
    <source>
        <dbReference type="PROSITE-ProRule" id="PRU10095"/>
    </source>
</evidence>
<evidence type="ECO:0000269" key="4">
    <source>
    </source>
</evidence>
<evidence type="ECO:0000305" key="5"/>
<comment type="function">
    <text evidence="1">Secreted metalloproteinase probably acting as a virulence factor.</text>
</comment>
<comment type="cofactor">
    <cofactor evidence="1">
        <name>Zn(2+)</name>
        <dbReference type="ChEBI" id="CHEBI:29105"/>
    </cofactor>
    <text evidence="1">Binds 1 zinc ion per subunit.</text>
</comment>
<comment type="subcellular location">
    <subcellularLocation>
        <location evidence="4">Secreted</location>
    </subcellularLocation>
</comment>
<comment type="similarity">
    <text evidence="5">Belongs to the peptidase M36 family.</text>
</comment>
<accession>B6V9X0</accession>
<accession>A1XIM0</accession>
<keyword id="KW-0325">Glycoprotein</keyword>
<keyword id="KW-0378">Hydrolase</keyword>
<keyword id="KW-0479">Metal-binding</keyword>
<keyword id="KW-0482">Metalloprotease</keyword>
<keyword id="KW-0645">Protease</keyword>
<keyword id="KW-0964">Secreted</keyword>
<keyword id="KW-0732">Signal</keyword>
<keyword id="KW-0843">Virulence</keyword>
<keyword id="KW-0862">Zinc</keyword>
<keyword id="KW-0865">Zymogen</keyword>
<sequence length="633" mass="69378">MHGLLLAGLLALPMNVLAHPAEQHASNVLSRRGVDIESFRLPLKAKYMDSDAAAQKIQAMSFSKDDDYVSTATKLVKSTFPKSTFRVVDDHYIGTNGIGHVHFKQTAHGLDIDNSDFNVNIDRDGKVFSFGNSFFTGEIPKENPMVKRAFSDPVKALKGAVKALNLPVKSDNAKAKTTAGKESFEFMGTTGALSAPKANLVYLQKEDGTLALTWRVETDVGDNWLLTYVDAHNSETVHNVVDYVASAEFKVFAWGLNDPTEGNPTSIRDPWTDSSPYTWHSDGMTKYPTTRGNNAIAQDNPTGGSTYINNYRPQSPNLIFNYPWSPTATPPSSYKDFSITQLFYTTNRFHDLLYSFGFNEAAGNFQVNNGNKGGRGNDFAIVNAQDGSGTNNANFATPPDGSPGRMRMYNWTTARPNRDGCLEAGIVIHEYAHGLSNRLCGGPANSGCLNALESGGMGEGWGDFYATAIRLKPRDTKDTNYSMGAWAANNPKGIRAYLYSTNLQTNPYMYTSVNSLREVHQIGTVWATMLYDLMWALIEAHGGTYSANPVFRNGVPQDGRHLAMKLVMDGMALQPCNPNFVQARDAILDADRALTNSANKCTIWKAFAKRGLGYGAKYDARNRTGSNRLPPGC</sequence>
<name>MEP3_TRITO</name>